<evidence type="ECO:0000255" key="1">
    <source>
        <dbReference type="HAMAP-Rule" id="MF_00476"/>
    </source>
</evidence>
<protein>
    <recommendedName>
        <fullName evidence="1">Putative nickel-responsive regulator</fullName>
    </recommendedName>
</protein>
<comment type="function">
    <text evidence="1">Transcriptional regulator.</text>
</comment>
<comment type="cofactor">
    <cofactor evidence="1">
        <name>Ni(2+)</name>
        <dbReference type="ChEBI" id="CHEBI:49786"/>
    </cofactor>
    <text evidence="1">Binds 1 nickel ion per subunit.</text>
</comment>
<comment type="similarity">
    <text evidence="1">Belongs to the transcriptional regulatory CopG/NikR family.</text>
</comment>
<feature type="chain" id="PRO_0000139289" description="Putative nickel-responsive regulator">
    <location>
        <begin position="1"/>
        <end position="139"/>
    </location>
</feature>
<feature type="binding site" evidence="1">
    <location>
        <position position="79"/>
    </location>
    <ligand>
        <name>Ni(2+)</name>
        <dbReference type="ChEBI" id="CHEBI:49786"/>
    </ligand>
</feature>
<feature type="binding site" evidence="1">
    <location>
        <position position="90"/>
    </location>
    <ligand>
        <name>Ni(2+)</name>
        <dbReference type="ChEBI" id="CHEBI:49786"/>
    </ligand>
</feature>
<feature type="binding site" evidence="1">
    <location>
        <position position="92"/>
    </location>
    <ligand>
        <name>Ni(2+)</name>
        <dbReference type="ChEBI" id="CHEBI:49786"/>
    </ligand>
</feature>
<feature type="binding site" evidence="1">
    <location>
        <position position="98"/>
    </location>
    <ligand>
        <name>Ni(2+)</name>
        <dbReference type="ChEBI" id="CHEBI:49786"/>
    </ligand>
</feature>
<keyword id="KW-0238">DNA-binding</keyword>
<keyword id="KW-0479">Metal-binding</keyword>
<keyword id="KW-0533">Nickel</keyword>
<keyword id="KW-1185">Reference proteome</keyword>
<keyword id="KW-0804">Transcription</keyword>
<keyword id="KW-0805">Transcription regulation</keyword>
<accession>Q748M1</accession>
<proteinExistence type="inferred from homology"/>
<gene>
    <name type="ordered locus">GSU2980</name>
</gene>
<dbReference type="EMBL" id="AE017180">
    <property type="protein sequence ID" value="AAR36372.1"/>
    <property type="molecule type" value="Genomic_DNA"/>
</dbReference>
<dbReference type="RefSeq" id="NP_954022.1">
    <property type="nucleotide sequence ID" value="NC_002939.5"/>
</dbReference>
<dbReference type="SMR" id="Q748M1"/>
<dbReference type="FunCoup" id="Q748M1">
    <property type="interactions" value="36"/>
</dbReference>
<dbReference type="STRING" id="243231.GSU2980"/>
<dbReference type="EnsemblBacteria" id="AAR36372">
    <property type="protein sequence ID" value="AAR36372"/>
    <property type="gene ID" value="GSU2980"/>
</dbReference>
<dbReference type="KEGG" id="gsu:GSU2980"/>
<dbReference type="PATRIC" id="fig|243231.5.peg.3006"/>
<dbReference type="eggNOG" id="COG0864">
    <property type="taxonomic scope" value="Bacteria"/>
</dbReference>
<dbReference type="HOGENOM" id="CLU_113319_1_2_7"/>
<dbReference type="InParanoid" id="Q748M1"/>
<dbReference type="OrthoDB" id="9806294at2"/>
<dbReference type="Proteomes" id="UP000000577">
    <property type="component" value="Chromosome"/>
</dbReference>
<dbReference type="GO" id="GO:0003677">
    <property type="term" value="F:DNA binding"/>
    <property type="evidence" value="ECO:0000318"/>
    <property type="project" value="GO_Central"/>
</dbReference>
<dbReference type="GO" id="GO:0003700">
    <property type="term" value="F:DNA-binding transcription factor activity"/>
    <property type="evidence" value="ECO:0007669"/>
    <property type="project" value="UniProtKB-UniRule"/>
</dbReference>
<dbReference type="GO" id="GO:0016151">
    <property type="term" value="F:nickel cation binding"/>
    <property type="evidence" value="ECO:0007669"/>
    <property type="project" value="UniProtKB-UniRule"/>
</dbReference>
<dbReference type="GO" id="GO:0006355">
    <property type="term" value="P:regulation of DNA-templated transcription"/>
    <property type="evidence" value="ECO:0000318"/>
    <property type="project" value="GO_Central"/>
</dbReference>
<dbReference type="GO" id="GO:0010045">
    <property type="term" value="P:response to nickel cation"/>
    <property type="evidence" value="ECO:0007669"/>
    <property type="project" value="InterPro"/>
</dbReference>
<dbReference type="CDD" id="cd22231">
    <property type="entry name" value="RHH_NikR_HicB-like"/>
    <property type="match status" value="1"/>
</dbReference>
<dbReference type="Gene3D" id="3.30.70.1150">
    <property type="entry name" value="ACT-like. Chain A, domain 2"/>
    <property type="match status" value="1"/>
</dbReference>
<dbReference type="Gene3D" id="1.10.1220.10">
    <property type="entry name" value="Met repressor-like"/>
    <property type="match status" value="1"/>
</dbReference>
<dbReference type="HAMAP" id="MF_00476">
    <property type="entry name" value="NikR"/>
    <property type="match status" value="1"/>
</dbReference>
<dbReference type="InterPro" id="IPR027271">
    <property type="entry name" value="Acetolactate_synth/TF_NikR_C"/>
</dbReference>
<dbReference type="InterPro" id="IPR045865">
    <property type="entry name" value="ACT-like_dom_sf"/>
</dbReference>
<dbReference type="InterPro" id="IPR013321">
    <property type="entry name" value="Arc_rbn_hlx_hlx"/>
</dbReference>
<dbReference type="InterPro" id="IPR002145">
    <property type="entry name" value="CopG"/>
</dbReference>
<dbReference type="InterPro" id="IPR050192">
    <property type="entry name" value="CopG/NikR_regulator"/>
</dbReference>
<dbReference type="InterPro" id="IPR022988">
    <property type="entry name" value="Ni_resp_reg_NikR"/>
</dbReference>
<dbReference type="InterPro" id="IPR010985">
    <property type="entry name" value="Ribbon_hlx_hlx"/>
</dbReference>
<dbReference type="InterPro" id="IPR014864">
    <property type="entry name" value="TF_NikR_Ni-bd_C"/>
</dbReference>
<dbReference type="NCBIfam" id="NF001884">
    <property type="entry name" value="PRK00630.1"/>
    <property type="match status" value="1"/>
</dbReference>
<dbReference type="NCBIfam" id="NF002169">
    <property type="entry name" value="PRK01002.1"/>
    <property type="match status" value="1"/>
</dbReference>
<dbReference type="NCBIfam" id="NF002815">
    <property type="entry name" value="PRK02967.1"/>
    <property type="match status" value="1"/>
</dbReference>
<dbReference type="NCBIfam" id="NF003381">
    <property type="entry name" value="PRK04460.1"/>
    <property type="match status" value="1"/>
</dbReference>
<dbReference type="PANTHER" id="PTHR34719">
    <property type="entry name" value="NICKEL-RESPONSIVE REGULATOR"/>
    <property type="match status" value="1"/>
</dbReference>
<dbReference type="PANTHER" id="PTHR34719:SF2">
    <property type="entry name" value="NICKEL-RESPONSIVE REGULATOR"/>
    <property type="match status" value="1"/>
</dbReference>
<dbReference type="Pfam" id="PF08753">
    <property type="entry name" value="NikR_C"/>
    <property type="match status" value="1"/>
</dbReference>
<dbReference type="Pfam" id="PF01402">
    <property type="entry name" value="RHH_1"/>
    <property type="match status" value="1"/>
</dbReference>
<dbReference type="SUPFAM" id="SSF55021">
    <property type="entry name" value="ACT-like"/>
    <property type="match status" value="1"/>
</dbReference>
<dbReference type="SUPFAM" id="SSF47598">
    <property type="entry name" value="Ribbon-helix-helix"/>
    <property type="match status" value="1"/>
</dbReference>
<sequence>MGETIRFGVSIDEKLLESFDGLIEEKGYMNRSEAIRDLIRAALVELKWEVGDEETVGTVTLVYDHHVRDLSDKLTEQQHAHHDKVISALHVHLDAHNCLEVLVVRGKAREVKKIADELIGVKGVKHGKLVMTTTGEELH</sequence>
<organism>
    <name type="scientific">Geobacter sulfurreducens (strain ATCC 51573 / DSM 12127 / PCA)</name>
    <dbReference type="NCBI Taxonomy" id="243231"/>
    <lineage>
        <taxon>Bacteria</taxon>
        <taxon>Pseudomonadati</taxon>
        <taxon>Thermodesulfobacteriota</taxon>
        <taxon>Desulfuromonadia</taxon>
        <taxon>Geobacterales</taxon>
        <taxon>Geobacteraceae</taxon>
        <taxon>Geobacter</taxon>
    </lineage>
</organism>
<name>NIKR_GEOSL</name>
<reference key="1">
    <citation type="journal article" date="2003" name="Science">
        <title>Genome of Geobacter sulfurreducens: metal reduction in subsurface environments.</title>
        <authorList>
            <person name="Methe B.A."/>
            <person name="Nelson K.E."/>
            <person name="Eisen J.A."/>
            <person name="Paulsen I.T."/>
            <person name="Nelson W.C."/>
            <person name="Heidelberg J.F."/>
            <person name="Wu D."/>
            <person name="Wu M."/>
            <person name="Ward N.L."/>
            <person name="Beanan M.J."/>
            <person name="Dodson R.J."/>
            <person name="Madupu R."/>
            <person name="Brinkac L.M."/>
            <person name="Daugherty S.C."/>
            <person name="DeBoy R.T."/>
            <person name="Durkin A.S."/>
            <person name="Gwinn M.L."/>
            <person name="Kolonay J.F."/>
            <person name="Sullivan S.A."/>
            <person name="Haft D.H."/>
            <person name="Selengut J."/>
            <person name="Davidsen T.M."/>
            <person name="Zafar N."/>
            <person name="White O."/>
            <person name="Tran B."/>
            <person name="Romero C."/>
            <person name="Forberger H.A."/>
            <person name="Weidman J.F."/>
            <person name="Khouri H.M."/>
            <person name="Feldblyum T.V."/>
            <person name="Utterback T.R."/>
            <person name="Van Aken S.E."/>
            <person name="Lovley D.R."/>
            <person name="Fraser C.M."/>
        </authorList>
    </citation>
    <scope>NUCLEOTIDE SEQUENCE [LARGE SCALE GENOMIC DNA]</scope>
    <source>
        <strain>ATCC 51573 / DSM 12127 / PCA</strain>
    </source>
</reference>